<sequence>METNQILETIRMIEEEKLDIRTITMGISLLDCMDGDGEVARKKIYQKIVTKARNLVAVGEAIESEFGIPIINKRISVTPIAIIAGSSADTDYVEFAKTLDAAAKEVGVNFIGGYSALVQKGYTKGDEILIRSIPQALAQTERVCSSVNVGSTRTGINMDAVRQMGEVIKETADLTADTQGLGCAKLVVFANAVEDNPFMAGAFHGVGEADCVINVGVSGPGVVKRAIEKVKGEPFDIVAETVKQTAFKITRMGQLVGQVASEKLGVPFGIVDLSLAPTPAIGDSVAHILEEMGLEMVGTHGTTAALALLNDAVKKGGVMACGHVGGLSGAFIPVSEDAGMIEAVQQGALNLEKLEAMTAICSVGLDMIAVPGDTTAETLAAMIADEAAIGVINNKTTAVRVIPASGTKVGDMVEFGGLLGTAPVMPVNGKSSVDFIARGGRIPAPIHSFKN</sequence>
<proteinExistence type="inferred from homology"/>
<organism>
    <name type="scientific">Listeria monocytogenes serotype 4b (strain CLIP80459)</name>
    <dbReference type="NCBI Taxonomy" id="568819"/>
    <lineage>
        <taxon>Bacteria</taxon>
        <taxon>Bacillati</taxon>
        <taxon>Bacillota</taxon>
        <taxon>Bacilli</taxon>
        <taxon>Bacillales</taxon>
        <taxon>Listeriaceae</taxon>
        <taxon>Listeria</taxon>
    </lineage>
</organism>
<dbReference type="EMBL" id="FM242711">
    <property type="protein sequence ID" value="CAS04328.1"/>
    <property type="molecule type" value="Genomic_DNA"/>
</dbReference>
<dbReference type="RefSeq" id="WP_003721328.1">
    <property type="nucleotide sequence ID" value="NC_012488.1"/>
</dbReference>
<dbReference type="SMR" id="C1L051"/>
<dbReference type="KEGG" id="lmc:Lm4b_00560"/>
<dbReference type="HOGENOM" id="CLU_048704_0_0_9"/>
<dbReference type="CDD" id="cd08025">
    <property type="entry name" value="RNR_PFL_like_DUF711"/>
    <property type="match status" value="1"/>
</dbReference>
<dbReference type="Gene3D" id="3.20.70.20">
    <property type="match status" value="1"/>
</dbReference>
<dbReference type="HAMAP" id="MF_01221">
    <property type="entry name" value="UPF0210"/>
    <property type="match status" value="1"/>
</dbReference>
<dbReference type="InterPro" id="IPR007841">
    <property type="entry name" value="UPF0210"/>
</dbReference>
<dbReference type="NCBIfam" id="NF003700">
    <property type="entry name" value="PRK05313.1"/>
    <property type="match status" value="1"/>
</dbReference>
<dbReference type="PANTHER" id="PTHR37560:SF1">
    <property type="entry name" value="UPF0210 PROTEIN MJ1665"/>
    <property type="match status" value="1"/>
</dbReference>
<dbReference type="PANTHER" id="PTHR37560">
    <property type="entry name" value="UPF0210 PROTEIN SPR0218"/>
    <property type="match status" value="1"/>
</dbReference>
<dbReference type="Pfam" id="PF05167">
    <property type="entry name" value="DUF711"/>
    <property type="match status" value="1"/>
</dbReference>
<dbReference type="SUPFAM" id="SSF51998">
    <property type="entry name" value="PFL-like glycyl radical enzymes"/>
    <property type="match status" value="1"/>
</dbReference>
<comment type="subunit">
    <text evidence="1">Homodimer.</text>
</comment>
<comment type="similarity">
    <text evidence="1">Belongs to the UPF0210 family.</text>
</comment>
<protein>
    <recommendedName>
        <fullName evidence="1">UPF0210 protein Lm4b_00560</fullName>
    </recommendedName>
</protein>
<feature type="chain" id="PRO_1000213965" description="UPF0210 protein Lm4b_00560">
    <location>
        <begin position="1"/>
        <end position="451"/>
    </location>
</feature>
<name>Y560_LISMC</name>
<gene>
    <name type="ordered locus">Lm4b_00560</name>
</gene>
<accession>C1L051</accession>
<evidence type="ECO:0000255" key="1">
    <source>
        <dbReference type="HAMAP-Rule" id="MF_01221"/>
    </source>
</evidence>
<reference key="1">
    <citation type="journal article" date="2012" name="BMC Genomics">
        <title>Comparative genomics and transcriptomics of lineages I, II, and III strains of Listeria monocytogenes.</title>
        <authorList>
            <person name="Hain T."/>
            <person name="Ghai R."/>
            <person name="Billion A."/>
            <person name="Kuenne C.T."/>
            <person name="Steinweg C."/>
            <person name="Izar B."/>
            <person name="Mohamed W."/>
            <person name="Mraheil M."/>
            <person name="Domann E."/>
            <person name="Schaffrath S."/>
            <person name="Karst U."/>
            <person name="Goesmann A."/>
            <person name="Oehm S."/>
            <person name="Puhler A."/>
            <person name="Merkl R."/>
            <person name="Vorwerk S."/>
            <person name="Glaser P."/>
            <person name="Garrido P."/>
            <person name="Rusniok C."/>
            <person name="Buchrieser C."/>
            <person name="Goebel W."/>
            <person name="Chakraborty T."/>
        </authorList>
    </citation>
    <scope>NUCLEOTIDE SEQUENCE [LARGE SCALE GENOMIC DNA]</scope>
    <source>
        <strain>CLIP80459</strain>
    </source>
</reference>